<evidence type="ECO:0000255" key="1">
    <source>
        <dbReference type="HAMAP-Rule" id="MF_00831"/>
    </source>
</evidence>
<proteinExistence type="inferred from homology"/>
<name>RUTC_CAUVC</name>
<protein>
    <recommendedName>
        <fullName evidence="1">3-aminoacrylate deaminase RutC</fullName>
        <shortName evidence="1">3-AA deaminase</shortName>
        <ecNumber evidence="1">3.5.-.-</ecNumber>
    </recommendedName>
</protein>
<feature type="chain" id="PRO_0000402713" description="3-aminoacrylate deaminase RutC">
    <location>
        <begin position="1"/>
        <end position="129"/>
    </location>
</feature>
<organism>
    <name type="scientific">Caulobacter vibrioides (strain ATCC 19089 / CIP 103742 / CB 15)</name>
    <name type="common">Caulobacter crescentus</name>
    <dbReference type="NCBI Taxonomy" id="190650"/>
    <lineage>
        <taxon>Bacteria</taxon>
        <taxon>Pseudomonadati</taxon>
        <taxon>Pseudomonadota</taxon>
        <taxon>Alphaproteobacteria</taxon>
        <taxon>Caulobacterales</taxon>
        <taxon>Caulobacteraceae</taxon>
        <taxon>Caulobacter</taxon>
    </lineage>
</organism>
<reference key="1">
    <citation type="journal article" date="2001" name="Proc. Natl. Acad. Sci. U.S.A.">
        <title>Complete genome sequence of Caulobacter crescentus.</title>
        <authorList>
            <person name="Nierman W.C."/>
            <person name="Feldblyum T.V."/>
            <person name="Laub M.T."/>
            <person name="Paulsen I.T."/>
            <person name="Nelson K.E."/>
            <person name="Eisen J.A."/>
            <person name="Heidelberg J.F."/>
            <person name="Alley M.R.K."/>
            <person name="Ohta N."/>
            <person name="Maddock J.R."/>
            <person name="Potocka I."/>
            <person name="Nelson W.C."/>
            <person name="Newton A."/>
            <person name="Stephens C."/>
            <person name="Phadke N.D."/>
            <person name="Ely B."/>
            <person name="DeBoy R.T."/>
            <person name="Dodson R.J."/>
            <person name="Durkin A.S."/>
            <person name="Gwinn M.L."/>
            <person name="Haft D.H."/>
            <person name="Kolonay J.F."/>
            <person name="Smit J."/>
            <person name="Craven M.B."/>
            <person name="Khouri H.M."/>
            <person name="Shetty J."/>
            <person name="Berry K.J."/>
            <person name="Utterback T.R."/>
            <person name="Tran K."/>
            <person name="Wolf A.M."/>
            <person name="Vamathevan J.J."/>
            <person name="Ermolaeva M.D."/>
            <person name="White O."/>
            <person name="Salzberg S.L."/>
            <person name="Venter J.C."/>
            <person name="Shapiro L."/>
            <person name="Fraser C.M."/>
        </authorList>
    </citation>
    <scope>NUCLEOTIDE SEQUENCE [LARGE SCALE GENOMIC DNA]</scope>
    <source>
        <strain>ATCC 19089 / CIP 103742 / CB 15</strain>
    </source>
</reference>
<keyword id="KW-0378">Hydrolase</keyword>
<keyword id="KW-1185">Reference proteome</keyword>
<gene>
    <name evidence="1" type="primary">rutC</name>
    <name type="ordered locus">CC_2796</name>
</gene>
<accession>Q9A4N4</accession>
<comment type="function">
    <text evidence="1">Involved in pyrimidine catabolism. Catalyzes the deamination of 3-aminoacrylate to malonic semialdehyde, a reaction that can also occur spontaneously. RutC may facilitate the reaction and modulate the metabolic fitness, rather than catalyzing essential functions.</text>
</comment>
<comment type="catalytic activity">
    <reaction evidence="1">
        <text>(Z)-3-aminoacrylate + H2O + H(+) = 3-oxopropanoate + NH4(+)</text>
        <dbReference type="Rhea" id="RHEA:34947"/>
        <dbReference type="ChEBI" id="CHEBI:15377"/>
        <dbReference type="ChEBI" id="CHEBI:15378"/>
        <dbReference type="ChEBI" id="CHEBI:28938"/>
        <dbReference type="ChEBI" id="CHEBI:33190"/>
        <dbReference type="ChEBI" id="CHEBI:59894"/>
    </reaction>
</comment>
<comment type="similarity">
    <text evidence="1">Belongs to the RutC family.</text>
</comment>
<dbReference type="EC" id="3.5.-.-" evidence="1"/>
<dbReference type="EMBL" id="AE005673">
    <property type="protein sequence ID" value="AAK24760.1"/>
    <property type="molecule type" value="Genomic_DNA"/>
</dbReference>
<dbReference type="PIR" id="D87595">
    <property type="entry name" value="D87595"/>
</dbReference>
<dbReference type="RefSeq" id="NP_421592.1">
    <property type="nucleotide sequence ID" value="NC_002696.2"/>
</dbReference>
<dbReference type="RefSeq" id="WP_010920637.1">
    <property type="nucleotide sequence ID" value="NC_002696.2"/>
</dbReference>
<dbReference type="SMR" id="Q9A4N4"/>
<dbReference type="STRING" id="190650.CC_2796"/>
<dbReference type="EnsemblBacteria" id="AAK24760">
    <property type="protein sequence ID" value="AAK24760"/>
    <property type="gene ID" value="CC_2796"/>
</dbReference>
<dbReference type="KEGG" id="ccr:CC_2796"/>
<dbReference type="PATRIC" id="fig|190650.5.peg.2798"/>
<dbReference type="eggNOG" id="COG0251">
    <property type="taxonomic scope" value="Bacteria"/>
</dbReference>
<dbReference type="HOGENOM" id="CLU_100715_7_3_5"/>
<dbReference type="BioCyc" id="CAULO:CC2796-MONOMER"/>
<dbReference type="Proteomes" id="UP000001816">
    <property type="component" value="Chromosome"/>
</dbReference>
<dbReference type="GO" id="GO:0005829">
    <property type="term" value="C:cytosol"/>
    <property type="evidence" value="ECO:0007669"/>
    <property type="project" value="TreeGrafter"/>
</dbReference>
<dbReference type="GO" id="GO:0019239">
    <property type="term" value="F:deaminase activity"/>
    <property type="evidence" value="ECO:0007669"/>
    <property type="project" value="TreeGrafter"/>
</dbReference>
<dbReference type="GO" id="GO:0019740">
    <property type="term" value="P:nitrogen utilization"/>
    <property type="evidence" value="ECO:0007669"/>
    <property type="project" value="UniProtKB-UniRule"/>
</dbReference>
<dbReference type="GO" id="GO:0006212">
    <property type="term" value="P:uracil catabolic process"/>
    <property type="evidence" value="ECO:0007669"/>
    <property type="project" value="UniProtKB-UniRule"/>
</dbReference>
<dbReference type="CDD" id="cd00448">
    <property type="entry name" value="YjgF_YER057c_UK114_family"/>
    <property type="match status" value="1"/>
</dbReference>
<dbReference type="Gene3D" id="3.30.1330.40">
    <property type="entry name" value="RutC-like"/>
    <property type="match status" value="1"/>
</dbReference>
<dbReference type="HAMAP" id="MF_00831">
    <property type="entry name" value="RutC"/>
    <property type="match status" value="1"/>
</dbReference>
<dbReference type="InterPro" id="IPR019898">
    <property type="entry name" value="RutC"/>
</dbReference>
<dbReference type="InterPro" id="IPR035959">
    <property type="entry name" value="RutC-like_sf"/>
</dbReference>
<dbReference type="InterPro" id="IPR006175">
    <property type="entry name" value="YjgF/YER057c/UK114"/>
</dbReference>
<dbReference type="NCBIfam" id="TIGR03610">
    <property type="entry name" value="RutC"/>
    <property type="match status" value="1"/>
</dbReference>
<dbReference type="PANTHER" id="PTHR11803">
    <property type="entry name" value="2-IMINOBUTANOATE/2-IMINOPROPANOATE DEAMINASE RIDA"/>
    <property type="match status" value="1"/>
</dbReference>
<dbReference type="PANTHER" id="PTHR11803:SF58">
    <property type="entry name" value="PROTEIN HMF1-RELATED"/>
    <property type="match status" value="1"/>
</dbReference>
<dbReference type="Pfam" id="PF01042">
    <property type="entry name" value="Ribonuc_L-PSP"/>
    <property type="match status" value="1"/>
</dbReference>
<dbReference type="SUPFAM" id="SSF55298">
    <property type="entry name" value="YjgF-like"/>
    <property type="match status" value="1"/>
</dbReference>
<sequence length="129" mass="13889">MPKTVITPPGTQTPIAPFSPGTLADGIVYVSGTLAFDKDNNVAFPGDAEAQTRQVLETIKSVIETAGGTMEDVTMNHIFLTDWVHYAPMNKVYAEYFPGDKPARYCIQCGLVKPGFVVEIASVAHIGKT</sequence>